<accession>Q5NQ42</accession>
<feature type="chain" id="PRO_0000230585" description="Small ribosomal subunit protein uS13">
    <location>
        <begin position="1"/>
        <end position="122"/>
    </location>
</feature>
<feature type="region of interest" description="Disordered" evidence="2">
    <location>
        <begin position="95"/>
        <end position="122"/>
    </location>
</feature>
<name>RS13_ZYMMO</name>
<comment type="function">
    <text evidence="1">Located at the top of the head of the 30S subunit, it contacts several helices of the 16S rRNA. In the 70S ribosome it contacts the 23S rRNA (bridge B1a) and protein L5 of the 50S subunit (bridge B1b), connecting the 2 subunits; these bridges are implicated in subunit movement. Contacts the tRNAs in the A and P-sites.</text>
</comment>
<comment type="subunit">
    <text evidence="1">Part of the 30S ribosomal subunit. Forms a loose heterodimer with protein S19. Forms two bridges to the 50S subunit in the 70S ribosome.</text>
</comment>
<comment type="similarity">
    <text evidence="1">Belongs to the universal ribosomal protein uS13 family.</text>
</comment>
<gene>
    <name evidence="1" type="primary">rpsM</name>
    <name type="ordered locus">ZMO0539</name>
</gene>
<sequence length="122" mass="13678">MARIAGVNIPTNKRVEIALTYIHGIGPTTAKKIVTKLGIAPERRVQDLSDNEVLQIREAIDADYTVEGDLRRQVAMNIKRLMDLACYRGLRHRKGLPVRGQRTHTNARTRKGKAKPIAGKKK</sequence>
<keyword id="KW-1185">Reference proteome</keyword>
<keyword id="KW-0687">Ribonucleoprotein</keyword>
<keyword id="KW-0689">Ribosomal protein</keyword>
<keyword id="KW-0694">RNA-binding</keyword>
<keyword id="KW-0699">rRNA-binding</keyword>
<keyword id="KW-0820">tRNA-binding</keyword>
<protein>
    <recommendedName>
        <fullName evidence="1">Small ribosomal subunit protein uS13</fullName>
    </recommendedName>
    <alternativeName>
        <fullName evidence="3">30S ribosomal protein S13</fullName>
    </alternativeName>
</protein>
<proteinExistence type="inferred from homology"/>
<dbReference type="EMBL" id="AE008692">
    <property type="protein sequence ID" value="AAV89163.2"/>
    <property type="molecule type" value="Genomic_DNA"/>
</dbReference>
<dbReference type="RefSeq" id="WP_011240445.1">
    <property type="nucleotide sequence ID" value="NZ_CP035711.1"/>
</dbReference>
<dbReference type="SMR" id="Q5NQ42"/>
<dbReference type="STRING" id="264203.ZMO0539"/>
<dbReference type="GeneID" id="79904270"/>
<dbReference type="KEGG" id="zmo:ZMO0539"/>
<dbReference type="eggNOG" id="COG0099">
    <property type="taxonomic scope" value="Bacteria"/>
</dbReference>
<dbReference type="HOGENOM" id="CLU_103849_1_2_5"/>
<dbReference type="Proteomes" id="UP000001173">
    <property type="component" value="Chromosome"/>
</dbReference>
<dbReference type="GO" id="GO:0005829">
    <property type="term" value="C:cytosol"/>
    <property type="evidence" value="ECO:0007669"/>
    <property type="project" value="TreeGrafter"/>
</dbReference>
<dbReference type="GO" id="GO:0015935">
    <property type="term" value="C:small ribosomal subunit"/>
    <property type="evidence" value="ECO:0007669"/>
    <property type="project" value="TreeGrafter"/>
</dbReference>
<dbReference type="GO" id="GO:0019843">
    <property type="term" value="F:rRNA binding"/>
    <property type="evidence" value="ECO:0007669"/>
    <property type="project" value="UniProtKB-UniRule"/>
</dbReference>
<dbReference type="GO" id="GO:0003735">
    <property type="term" value="F:structural constituent of ribosome"/>
    <property type="evidence" value="ECO:0007669"/>
    <property type="project" value="InterPro"/>
</dbReference>
<dbReference type="GO" id="GO:0000049">
    <property type="term" value="F:tRNA binding"/>
    <property type="evidence" value="ECO:0007669"/>
    <property type="project" value="UniProtKB-UniRule"/>
</dbReference>
<dbReference type="GO" id="GO:0006412">
    <property type="term" value="P:translation"/>
    <property type="evidence" value="ECO:0007669"/>
    <property type="project" value="UniProtKB-UniRule"/>
</dbReference>
<dbReference type="FunFam" id="1.10.8.50:FF:000001">
    <property type="entry name" value="30S ribosomal protein S13"/>
    <property type="match status" value="1"/>
</dbReference>
<dbReference type="FunFam" id="4.10.910.10:FF:000001">
    <property type="entry name" value="30S ribosomal protein S13"/>
    <property type="match status" value="1"/>
</dbReference>
<dbReference type="Gene3D" id="1.10.8.50">
    <property type="match status" value="1"/>
</dbReference>
<dbReference type="Gene3D" id="4.10.910.10">
    <property type="entry name" value="30s ribosomal protein s13, domain 2"/>
    <property type="match status" value="1"/>
</dbReference>
<dbReference type="HAMAP" id="MF_01315">
    <property type="entry name" value="Ribosomal_uS13"/>
    <property type="match status" value="1"/>
</dbReference>
<dbReference type="InterPro" id="IPR027437">
    <property type="entry name" value="Rbsml_uS13_C"/>
</dbReference>
<dbReference type="InterPro" id="IPR001892">
    <property type="entry name" value="Ribosomal_uS13"/>
</dbReference>
<dbReference type="InterPro" id="IPR010979">
    <property type="entry name" value="Ribosomal_uS13-like_H2TH"/>
</dbReference>
<dbReference type="InterPro" id="IPR019980">
    <property type="entry name" value="Ribosomal_uS13_bac-type"/>
</dbReference>
<dbReference type="InterPro" id="IPR018269">
    <property type="entry name" value="Ribosomal_uS13_CS"/>
</dbReference>
<dbReference type="NCBIfam" id="TIGR03631">
    <property type="entry name" value="uS13_bact"/>
    <property type="match status" value="1"/>
</dbReference>
<dbReference type="PANTHER" id="PTHR10871">
    <property type="entry name" value="30S RIBOSOMAL PROTEIN S13/40S RIBOSOMAL PROTEIN S18"/>
    <property type="match status" value="1"/>
</dbReference>
<dbReference type="PANTHER" id="PTHR10871:SF1">
    <property type="entry name" value="SMALL RIBOSOMAL SUBUNIT PROTEIN US13M"/>
    <property type="match status" value="1"/>
</dbReference>
<dbReference type="Pfam" id="PF00416">
    <property type="entry name" value="Ribosomal_S13"/>
    <property type="match status" value="1"/>
</dbReference>
<dbReference type="PIRSF" id="PIRSF002134">
    <property type="entry name" value="Ribosomal_S13"/>
    <property type="match status" value="1"/>
</dbReference>
<dbReference type="SUPFAM" id="SSF46946">
    <property type="entry name" value="S13-like H2TH domain"/>
    <property type="match status" value="1"/>
</dbReference>
<dbReference type="PROSITE" id="PS00646">
    <property type="entry name" value="RIBOSOMAL_S13_1"/>
    <property type="match status" value="1"/>
</dbReference>
<dbReference type="PROSITE" id="PS50159">
    <property type="entry name" value="RIBOSOMAL_S13_2"/>
    <property type="match status" value="1"/>
</dbReference>
<organism>
    <name type="scientific">Zymomonas mobilis subsp. mobilis (strain ATCC 31821 / ZM4 / CP4)</name>
    <dbReference type="NCBI Taxonomy" id="264203"/>
    <lineage>
        <taxon>Bacteria</taxon>
        <taxon>Pseudomonadati</taxon>
        <taxon>Pseudomonadota</taxon>
        <taxon>Alphaproteobacteria</taxon>
        <taxon>Sphingomonadales</taxon>
        <taxon>Zymomonadaceae</taxon>
        <taxon>Zymomonas</taxon>
    </lineage>
</organism>
<reference key="1">
    <citation type="journal article" date="2005" name="Nat. Biotechnol.">
        <title>The genome sequence of the ethanologenic bacterium Zymomonas mobilis ZM4.</title>
        <authorList>
            <person name="Seo J.-S."/>
            <person name="Chong H."/>
            <person name="Park H.S."/>
            <person name="Yoon K.-O."/>
            <person name="Jung C."/>
            <person name="Kim J.J."/>
            <person name="Hong J.H."/>
            <person name="Kim H."/>
            <person name="Kim J.-H."/>
            <person name="Kil J.-I."/>
            <person name="Park C.J."/>
            <person name="Oh H.-M."/>
            <person name="Lee J.-S."/>
            <person name="Jin S.-J."/>
            <person name="Um H.-W."/>
            <person name="Lee H.-J."/>
            <person name="Oh S.-J."/>
            <person name="Kim J.Y."/>
            <person name="Kang H.L."/>
            <person name="Lee S.Y."/>
            <person name="Lee K.J."/>
            <person name="Kang H.S."/>
        </authorList>
    </citation>
    <scope>NUCLEOTIDE SEQUENCE [LARGE SCALE GENOMIC DNA]</scope>
    <source>
        <strain>ATCC 31821 / ZM4 / CP4</strain>
    </source>
</reference>
<evidence type="ECO:0000255" key="1">
    <source>
        <dbReference type="HAMAP-Rule" id="MF_01315"/>
    </source>
</evidence>
<evidence type="ECO:0000256" key="2">
    <source>
        <dbReference type="SAM" id="MobiDB-lite"/>
    </source>
</evidence>
<evidence type="ECO:0000305" key="3"/>